<dbReference type="EMBL" id="CP000103">
    <property type="protein sequence ID" value="ABB75843.1"/>
    <property type="molecule type" value="Genomic_DNA"/>
</dbReference>
<dbReference type="RefSeq" id="WP_011381842.1">
    <property type="nucleotide sequence ID" value="NC_007614.1"/>
</dbReference>
<dbReference type="SMR" id="Q2Y5X8"/>
<dbReference type="STRING" id="323848.Nmul_A2554"/>
<dbReference type="KEGG" id="nmu:Nmul_A2554"/>
<dbReference type="eggNOG" id="COG0184">
    <property type="taxonomic scope" value="Bacteria"/>
</dbReference>
<dbReference type="HOGENOM" id="CLU_148518_0_0_4"/>
<dbReference type="OrthoDB" id="9799262at2"/>
<dbReference type="Proteomes" id="UP000002718">
    <property type="component" value="Chromosome"/>
</dbReference>
<dbReference type="GO" id="GO:0022627">
    <property type="term" value="C:cytosolic small ribosomal subunit"/>
    <property type="evidence" value="ECO:0007669"/>
    <property type="project" value="TreeGrafter"/>
</dbReference>
<dbReference type="GO" id="GO:0019843">
    <property type="term" value="F:rRNA binding"/>
    <property type="evidence" value="ECO:0007669"/>
    <property type="project" value="UniProtKB-UniRule"/>
</dbReference>
<dbReference type="GO" id="GO:0003735">
    <property type="term" value="F:structural constituent of ribosome"/>
    <property type="evidence" value="ECO:0007669"/>
    <property type="project" value="InterPro"/>
</dbReference>
<dbReference type="GO" id="GO:0006412">
    <property type="term" value="P:translation"/>
    <property type="evidence" value="ECO:0007669"/>
    <property type="project" value="UniProtKB-UniRule"/>
</dbReference>
<dbReference type="CDD" id="cd00353">
    <property type="entry name" value="Ribosomal_S15p_S13e"/>
    <property type="match status" value="1"/>
</dbReference>
<dbReference type="FunFam" id="1.10.287.10:FF:000002">
    <property type="entry name" value="30S ribosomal protein S15"/>
    <property type="match status" value="1"/>
</dbReference>
<dbReference type="Gene3D" id="6.10.250.3130">
    <property type="match status" value="1"/>
</dbReference>
<dbReference type="Gene3D" id="1.10.287.10">
    <property type="entry name" value="S15/NS1, RNA-binding"/>
    <property type="match status" value="1"/>
</dbReference>
<dbReference type="HAMAP" id="MF_01343_B">
    <property type="entry name" value="Ribosomal_uS15_B"/>
    <property type="match status" value="1"/>
</dbReference>
<dbReference type="InterPro" id="IPR000589">
    <property type="entry name" value="Ribosomal_uS15"/>
</dbReference>
<dbReference type="InterPro" id="IPR005290">
    <property type="entry name" value="Ribosomal_uS15_bac-type"/>
</dbReference>
<dbReference type="InterPro" id="IPR009068">
    <property type="entry name" value="uS15_NS1_RNA-bd_sf"/>
</dbReference>
<dbReference type="NCBIfam" id="TIGR00952">
    <property type="entry name" value="S15_bact"/>
    <property type="match status" value="1"/>
</dbReference>
<dbReference type="PANTHER" id="PTHR23321">
    <property type="entry name" value="RIBOSOMAL PROTEIN S15, BACTERIAL AND ORGANELLAR"/>
    <property type="match status" value="1"/>
</dbReference>
<dbReference type="PANTHER" id="PTHR23321:SF26">
    <property type="entry name" value="SMALL RIBOSOMAL SUBUNIT PROTEIN US15M"/>
    <property type="match status" value="1"/>
</dbReference>
<dbReference type="Pfam" id="PF00312">
    <property type="entry name" value="Ribosomal_S15"/>
    <property type="match status" value="1"/>
</dbReference>
<dbReference type="SMART" id="SM01387">
    <property type="entry name" value="Ribosomal_S15"/>
    <property type="match status" value="1"/>
</dbReference>
<dbReference type="SUPFAM" id="SSF47060">
    <property type="entry name" value="S15/NS1 RNA-binding domain"/>
    <property type="match status" value="1"/>
</dbReference>
<dbReference type="PROSITE" id="PS00362">
    <property type="entry name" value="RIBOSOMAL_S15"/>
    <property type="match status" value="1"/>
</dbReference>
<gene>
    <name evidence="1" type="primary">rpsO</name>
    <name type="ordered locus">Nmul_A2554</name>
</gene>
<keyword id="KW-1185">Reference proteome</keyword>
<keyword id="KW-0687">Ribonucleoprotein</keyword>
<keyword id="KW-0689">Ribosomal protein</keyword>
<keyword id="KW-0694">RNA-binding</keyword>
<keyword id="KW-0699">rRNA-binding</keyword>
<protein>
    <recommendedName>
        <fullName evidence="1">Small ribosomal subunit protein uS15</fullName>
    </recommendedName>
    <alternativeName>
        <fullName evidence="2">30S ribosomal protein S15</fullName>
    </alternativeName>
</protein>
<proteinExistence type="inferred from homology"/>
<name>RS15_NITMU</name>
<sequence>MAVTTDQKAQVVRDYQRAAGDTGSPEVQVALLTARINDLADHFKTHVKDHHSRRGLLRMVSRRRKLLDYLKQNSVESYRTLIERLGLRK</sequence>
<evidence type="ECO:0000255" key="1">
    <source>
        <dbReference type="HAMAP-Rule" id="MF_01343"/>
    </source>
</evidence>
<evidence type="ECO:0000305" key="2"/>
<comment type="function">
    <text evidence="1">One of the primary rRNA binding proteins, it binds directly to 16S rRNA where it helps nucleate assembly of the platform of the 30S subunit by binding and bridging several RNA helices of the 16S rRNA.</text>
</comment>
<comment type="function">
    <text evidence="1">Forms an intersubunit bridge (bridge B4) with the 23S rRNA of the 50S subunit in the ribosome.</text>
</comment>
<comment type="subunit">
    <text evidence="1">Part of the 30S ribosomal subunit. Forms a bridge to the 50S subunit in the 70S ribosome, contacting the 23S rRNA.</text>
</comment>
<comment type="similarity">
    <text evidence="1">Belongs to the universal ribosomal protein uS15 family.</text>
</comment>
<reference key="1">
    <citation type="submission" date="2005-08" db="EMBL/GenBank/DDBJ databases">
        <title>Complete sequence of chromosome 1 of Nitrosospira multiformis ATCC 25196.</title>
        <authorList>
            <person name="Copeland A."/>
            <person name="Lucas S."/>
            <person name="Lapidus A."/>
            <person name="Barry K."/>
            <person name="Detter J.C."/>
            <person name="Glavina T."/>
            <person name="Hammon N."/>
            <person name="Israni S."/>
            <person name="Pitluck S."/>
            <person name="Chain P."/>
            <person name="Malfatti S."/>
            <person name="Shin M."/>
            <person name="Vergez L."/>
            <person name="Schmutz J."/>
            <person name="Larimer F."/>
            <person name="Land M."/>
            <person name="Hauser L."/>
            <person name="Kyrpides N."/>
            <person name="Lykidis A."/>
            <person name="Richardson P."/>
        </authorList>
    </citation>
    <scope>NUCLEOTIDE SEQUENCE [LARGE SCALE GENOMIC DNA]</scope>
    <source>
        <strain>ATCC 25196 / NCIMB 11849 / C 71</strain>
    </source>
</reference>
<accession>Q2Y5X8</accession>
<organism>
    <name type="scientific">Nitrosospira multiformis (strain ATCC 25196 / NCIMB 11849 / C 71)</name>
    <dbReference type="NCBI Taxonomy" id="323848"/>
    <lineage>
        <taxon>Bacteria</taxon>
        <taxon>Pseudomonadati</taxon>
        <taxon>Pseudomonadota</taxon>
        <taxon>Betaproteobacteria</taxon>
        <taxon>Nitrosomonadales</taxon>
        <taxon>Nitrosomonadaceae</taxon>
        <taxon>Nitrosospira</taxon>
    </lineage>
</organism>
<feature type="chain" id="PRO_0000255511" description="Small ribosomal subunit protein uS15">
    <location>
        <begin position="1"/>
        <end position="89"/>
    </location>
</feature>